<keyword id="KW-0963">Cytoplasm</keyword>
<keyword id="KW-0275">Fatty acid biosynthesis</keyword>
<keyword id="KW-0276">Fatty acid metabolism</keyword>
<keyword id="KW-0444">Lipid biosynthesis</keyword>
<keyword id="KW-0443">Lipid metabolism</keyword>
<keyword id="KW-0460">Magnesium</keyword>
<keyword id="KW-0479">Metal-binding</keyword>
<keyword id="KW-1185">Reference proteome</keyword>
<keyword id="KW-0808">Transferase</keyword>
<comment type="function">
    <text evidence="1">Transfers the 4'-phosphopantetheine moiety from coenzyme A to a Ser of acyl-carrier-protein.</text>
</comment>
<comment type="catalytic activity">
    <reaction evidence="1">
        <text>apo-[ACP] + CoA = holo-[ACP] + adenosine 3',5'-bisphosphate + H(+)</text>
        <dbReference type="Rhea" id="RHEA:12068"/>
        <dbReference type="Rhea" id="RHEA-COMP:9685"/>
        <dbReference type="Rhea" id="RHEA-COMP:9690"/>
        <dbReference type="ChEBI" id="CHEBI:15378"/>
        <dbReference type="ChEBI" id="CHEBI:29999"/>
        <dbReference type="ChEBI" id="CHEBI:57287"/>
        <dbReference type="ChEBI" id="CHEBI:58343"/>
        <dbReference type="ChEBI" id="CHEBI:64479"/>
        <dbReference type="EC" id="2.7.8.7"/>
    </reaction>
</comment>
<comment type="cofactor">
    <cofactor evidence="1">
        <name>Mg(2+)</name>
        <dbReference type="ChEBI" id="CHEBI:18420"/>
    </cofactor>
</comment>
<comment type="subcellular location">
    <subcellularLocation>
        <location evidence="1">Cytoplasm</location>
    </subcellularLocation>
</comment>
<comment type="similarity">
    <text evidence="1">Belongs to the P-Pant transferase superfamily. AcpS family.</text>
</comment>
<proteinExistence type="inferred from homology"/>
<sequence>MIYGIGTDIVSLKRIIRLNKKFGQAFAGRILTPEELLEFPQAGKPVNYLAKRFAAKEAFAKAVGTGIRGAVSFRNIGIGHDALGKPEFFYGPALSKWLEEQGISRVSLSMSDEEDTVLAFVVAEK</sequence>
<reference key="1">
    <citation type="journal article" date="2000" name="Science">
        <title>Complete genome sequence of Neisseria meningitidis serogroup B strain MC58.</title>
        <authorList>
            <person name="Tettelin H."/>
            <person name="Saunders N.J."/>
            <person name="Heidelberg J.F."/>
            <person name="Jeffries A.C."/>
            <person name="Nelson K.E."/>
            <person name="Eisen J.A."/>
            <person name="Ketchum K.A."/>
            <person name="Hood D.W."/>
            <person name="Peden J.F."/>
            <person name="Dodson R.J."/>
            <person name="Nelson W.C."/>
            <person name="Gwinn M.L."/>
            <person name="DeBoy R.T."/>
            <person name="Peterson J.D."/>
            <person name="Hickey E.K."/>
            <person name="Haft D.H."/>
            <person name="Salzberg S.L."/>
            <person name="White O."/>
            <person name="Fleischmann R.D."/>
            <person name="Dougherty B.A."/>
            <person name="Mason T.M."/>
            <person name="Ciecko A."/>
            <person name="Parksey D.S."/>
            <person name="Blair E."/>
            <person name="Cittone H."/>
            <person name="Clark E.B."/>
            <person name="Cotton M.D."/>
            <person name="Utterback T.R."/>
            <person name="Khouri H.M."/>
            <person name="Qin H."/>
            <person name="Vamathevan J.J."/>
            <person name="Gill J."/>
            <person name="Scarlato V."/>
            <person name="Masignani V."/>
            <person name="Pizza M."/>
            <person name="Grandi G."/>
            <person name="Sun L."/>
            <person name="Smith H.O."/>
            <person name="Fraser C.M."/>
            <person name="Moxon E.R."/>
            <person name="Rappuoli R."/>
            <person name="Venter J.C."/>
        </authorList>
    </citation>
    <scope>NUCLEOTIDE SEQUENCE [LARGE SCALE GENOMIC DNA]</scope>
    <source>
        <strain>ATCC BAA-335 / MC58</strain>
    </source>
</reference>
<dbReference type="EC" id="2.7.8.7" evidence="1"/>
<dbReference type="EMBL" id="AE002098">
    <property type="protein sequence ID" value="AAF40889.1"/>
    <property type="molecule type" value="Genomic_DNA"/>
</dbReference>
<dbReference type="PIR" id="F81197">
    <property type="entry name" value="F81197"/>
</dbReference>
<dbReference type="RefSeq" id="NP_273499.1">
    <property type="nucleotide sequence ID" value="NC_003112.2"/>
</dbReference>
<dbReference type="RefSeq" id="WP_002212541.1">
    <property type="nucleotide sequence ID" value="NC_003112.2"/>
</dbReference>
<dbReference type="SMR" id="P0A0Q5"/>
<dbReference type="FunCoup" id="P0A0Q5">
    <property type="interactions" value="142"/>
</dbReference>
<dbReference type="STRING" id="122586.NMB0452"/>
<dbReference type="PaxDb" id="122586-NMB0452"/>
<dbReference type="KEGG" id="nme:NMB0452"/>
<dbReference type="PATRIC" id="fig|122586.8.peg.575"/>
<dbReference type="HOGENOM" id="CLU_089696_3_1_4"/>
<dbReference type="InParanoid" id="P0A0Q5"/>
<dbReference type="OrthoDB" id="517356at2"/>
<dbReference type="Proteomes" id="UP000000425">
    <property type="component" value="Chromosome"/>
</dbReference>
<dbReference type="GO" id="GO:0005737">
    <property type="term" value="C:cytoplasm"/>
    <property type="evidence" value="ECO:0007669"/>
    <property type="project" value="UniProtKB-SubCell"/>
</dbReference>
<dbReference type="GO" id="GO:0008897">
    <property type="term" value="F:holo-[acyl-carrier-protein] synthase activity"/>
    <property type="evidence" value="ECO:0007669"/>
    <property type="project" value="UniProtKB-UniRule"/>
</dbReference>
<dbReference type="GO" id="GO:0000287">
    <property type="term" value="F:magnesium ion binding"/>
    <property type="evidence" value="ECO:0007669"/>
    <property type="project" value="UniProtKB-UniRule"/>
</dbReference>
<dbReference type="GO" id="GO:0006633">
    <property type="term" value="P:fatty acid biosynthetic process"/>
    <property type="evidence" value="ECO:0007669"/>
    <property type="project" value="UniProtKB-UniRule"/>
</dbReference>
<dbReference type="Gene3D" id="3.90.470.20">
    <property type="entry name" value="4'-phosphopantetheinyl transferase domain"/>
    <property type="match status" value="1"/>
</dbReference>
<dbReference type="HAMAP" id="MF_00101">
    <property type="entry name" value="AcpS"/>
    <property type="match status" value="1"/>
</dbReference>
<dbReference type="InterPro" id="IPR008278">
    <property type="entry name" value="4-PPantetheinyl_Trfase_dom"/>
</dbReference>
<dbReference type="InterPro" id="IPR037143">
    <property type="entry name" value="4-PPantetheinyl_Trfase_dom_sf"/>
</dbReference>
<dbReference type="InterPro" id="IPR002582">
    <property type="entry name" value="ACPS"/>
</dbReference>
<dbReference type="InterPro" id="IPR004568">
    <property type="entry name" value="Ppantetheine-prot_Trfase_dom"/>
</dbReference>
<dbReference type="NCBIfam" id="TIGR00516">
    <property type="entry name" value="acpS"/>
    <property type="match status" value="1"/>
</dbReference>
<dbReference type="NCBIfam" id="TIGR00556">
    <property type="entry name" value="pantethn_trn"/>
    <property type="match status" value="1"/>
</dbReference>
<dbReference type="Pfam" id="PF01648">
    <property type="entry name" value="ACPS"/>
    <property type="match status" value="1"/>
</dbReference>
<dbReference type="SUPFAM" id="SSF56214">
    <property type="entry name" value="4'-phosphopantetheinyl transferase"/>
    <property type="match status" value="1"/>
</dbReference>
<gene>
    <name evidence="1" type="primary">acpS</name>
    <name type="synonym">dpj</name>
    <name type="ordered locus">NMB0452</name>
</gene>
<organism>
    <name type="scientific">Neisseria meningitidis serogroup B (strain ATCC BAA-335 / MC58)</name>
    <dbReference type="NCBI Taxonomy" id="122586"/>
    <lineage>
        <taxon>Bacteria</taxon>
        <taxon>Pseudomonadati</taxon>
        <taxon>Pseudomonadota</taxon>
        <taxon>Betaproteobacteria</taxon>
        <taxon>Neisseriales</taxon>
        <taxon>Neisseriaceae</taxon>
        <taxon>Neisseria</taxon>
    </lineage>
</organism>
<evidence type="ECO:0000255" key="1">
    <source>
        <dbReference type="HAMAP-Rule" id="MF_00101"/>
    </source>
</evidence>
<name>ACPS_NEIMB</name>
<feature type="chain" id="PRO_0000175677" description="Holo-[acyl-carrier-protein] synthase">
    <location>
        <begin position="1"/>
        <end position="125"/>
    </location>
</feature>
<feature type="binding site" evidence="1">
    <location>
        <position position="8"/>
    </location>
    <ligand>
        <name>Mg(2+)</name>
        <dbReference type="ChEBI" id="CHEBI:18420"/>
    </ligand>
</feature>
<feature type="binding site" evidence="1">
    <location>
        <position position="57"/>
    </location>
    <ligand>
        <name>Mg(2+)</name>
        <dbReference type="ChEBI" id="CHEBI:18420"/>
    </ligand>
</feature>
<protein>
    <recommendedName>
        <fullName evidence="1">Holo-[acyl-carrier-protein] synthase</fullName>
        <shortName evidence="1">Holo-ACP synthase</shortName>
        <ecNumber evidence="1">2.7.8.7</ecNumber>
    </recommendedName>
    <alternativeName>
        <fullName evidence="1">4'-phosphopantetheinyl transferase AcpS</fullName>
    </alternativeName>
</protein>
<accession>P0A0Q5</accession>
<accession>Q9RML8</accession>